<reference key="1">
    <citation type="journal article" date="2005" name="Genetics">
        <title>Gene clusters for insecticidal loline alkaloids in the grass-endophytic fungus Neotyphodium uncinatum.</title>
        <authorList>
            <person name="Spiering M.J."/>
            <person name="Moon C.D."/>
            <person name="Wilkinson H.H."/>
            <person name="Schardl C.L."/>
        </authorList>
    </citation>
    <scope>NUCLEOTIDE SEQUENCE [GENOMIC DNA]</scope>
    <scope>INDUCTION</scope>
    <scope>FUNCTION</scope>
    <source>
        <strain>CBS 102646</strain>
    </source>
</reference>
<reference key="2">
    <citation type="journal article" date="2005" name="ChemBioChem">
        <title>Biosynthetic precursors of fungal pyrrolizidines, the loline alkaloids.</title>
        <authorList>
            <person name="Blankenship J.D."/>
            <person name="Houseknecht J.B."/>
            <person name="Pal S."/>
            <person name="Bush L.P."/>
            <person name="Grossman R.B."/>
            <person name="Schardl C.L."/>
        </authorList>
    </citation>
    <scope>FUNCTION</scope>
</reference>
<reference key="3">
    <citation type="journal article" date="2006" name="ChemBioChem">
        <title>On the sequence of bond formation in loline alkaloid biosynthesis.</title>
        <authorList>
            <person name="Faulkner J.R."/>
            <person name="Hussaini S.R."/>
            <person name="Blankenship J.D."/>
            <person name="Pal S."/>
            <person name="Branan B.M."/>
            <person name="Grossman R.B."/>
            <person name="Schardl C.L."/>
        </authorList>
    </citation>
    <scope>FUNCTION</scope>
</reference>
<reference key="4">
    <citation type="journal article" date="2008" name="Fungal Genet. Biol.">
        <title>Role of the LolP cytochrome P450 monooxygenase in loline alkaloid biosynthesis.</title>
        <authorList>
            <person name="Spiering M.J."/>
            <person name="Faulkner J.R."/>
            <person name="Zhang D.X."/>
            <person name="Machado C."/>
            <person name="Grossman R.B."/>
            <person name="Schardl C.L."/>
        </authorList>
    </citation>
    <scope>FUNCTION</scope>
    <source>
        <strain>CBS 102646</strain>
    </source>
</reference>
<reference key="5">
    <citation type="journal article" date="2014" name="Phytochemistry">
        <title>Ether bridge formation in loline alkaloid biosynthesis.</title>
        <authorList>
            <person name="Pan J."/>
            <person name="Bhardwaj M."/>
            <person name="Faulkner J.R."/>
            <person name="Nagabhyru P."/>
            <person name="Charlton N.D."/>
            <person name="Higashi R.M."/>
            <person name="Miller A.F."/>
            <person name="Young C.A."/>
            <person name="Grossman R.B."/>
            <person name="Schardl C.L."/>
        </authorList>
    </citation>
    <scope>FUNCTION</scope>
</reference>
<reference key="6">
    <citation type="journal article" date="2014" name="PLoS ONE">
        <title>Enzymes from fungal and plant origin required for chemical diversification of insecticidal loline alkaloids in grass-Epichloe symbiota.</title>
        <authorList>
            <person name="Pan J."/>
            <person name="Bhardwaj M."/>
            <person name="Nagabhyru P."/>
            <person name="Grossman R.B."/>
            <person name="Schardl C.L."/>
        </authorList>
    </citation>
    <scope>FUNCTION</scope>
    <scope>BIOTECHNOLOGY</scope>
</reference>
<reference key="7">
    <citation type="journal article" date="2018" name="Biochemistry">
        <title>Installation of the ether bridge of lolines by the iron- and 2-oxoglutarate-dependent oxygenase, lolO: regio- and stereochemistry of sequential hydroxylation and oxacyclization reactions.</title>
        <authorList>
            <person name="Pan J."/>
            <person name="Bhardwaj M."/>
            <person name="Zhang B."/>
            <person name="Chang W.C."/>
            <person name="Schardl C.L."/>
            <person name="Krebs C."/>
            <person name="Grossman R.B."/>
            <person name="Bollinger J.M. Jr."/>
        </authorList>
    </citation>
    <scope>FUNCTION</scope>
</reference>
<proteinExistence type="evidence at transcript level"/>
<feature type="chain" id="PRO_0000444366" description="L-cysteine desulfhydrase-like protein lolT2">
    <location>
        <begin position="1"/>
        <end position="464"/>
    </location>
</feature>
<feature type="modified residue" description="N6-(pyridoxal phosphate)lysine" evidence="1">
    <location>
        <position position="227"/>
    </location>
</feature>
<comment type="function">
    <text evidence="2 3 4 5 6 7 8">L-cysteine desulfhydrase-like protein; part of the gene cluster that mediates the biosynthesis of loline alkaloids, potent insecticidal agents composed of a pyrrolizidine ring system and an uncommon ether bridge linking carbons 2 and 7 (PubMed:15654104). Lolines are structurally differentiated by the various modifications of the L-amino group and include norloline, loline, N-methylloline, N-acetylloline, N-acetylnorloline, and N-formylloline (PubMed:15861432, PubMed:25531527). The first committed step is the condensation of O-acetyl-L-homoserine (derived from L-aspartic acid) and L-proline, probably catalyzed by the gamma-type pyridoxal 5'-phosphate(PLP)-dependent enzyme lolC, to give the diamino diacid, NACPP (PubMed:15861432, PubMed:16755627). Ensuing cyclization, decarboxylation, and acetylation steps yield 1-exo-acetamidopyrrolizidine (AcAP) (PubMed:24374065). LolO is required for installation of the ether bridge upon the pathway intermediate, 1-exo-acetamidopyrrolizidine (AcAP) (PubMed:29537853). In sequential 2-oxoglutarate- and O(2)-consuming steps, lolO removes hydrogens from C2 and C7 of AcAP to form both carbon-oxygen bonds in N-acetylnorloline (NANL), the precursor to all other lolines (PubMed:24374065, PubMed:29537853). The enzymes lolD, lolE, lolF and lolT have also been proposed to be involved in the ether-bridge installation (PubMed:15654104). Further processing of the exocyclic moiety of NANL by fungal N-acetamidase (LolN), methyltransferase (LolM), and cytochrome P450 (LolP) enzymes, with occasional involvement of a plant acetyltransferase, generates the other known lolines (PubMed:18655839, PubMed:25531527). LolN transforms NANL to norlonine which is monomethylated and dimethylated to respectively lonine and N-methyllonine (NML) by lolM (PubMed:25531527). LolP catalyzes hydroxylation of the methyl group in N-methylloline (NML) and further oxygenation to N-formylloline (NFL) (PubMed:18655839). A plant acetyltransferase is responsible for the acetylation of loline to form N-acetylloline (NAL) (PubMed:25531527). LolA might interact with aspartate kinase to prevent feedback inhibition of its activity by these end products and thereby promote production of L-homoserine from L-aspartate (PubMed:15654104).</text>
</comment>
<comment type="cofactor">
    <cofactor evidence="1">
        <name>pyridoxal 5'-phosphate</name>
        <dbReference type="ChEBI" id="CHEBI:597326"/>
    </cofactor>
</comment>
<comment type="pathway">
    <text evidence="2">Alkaloid biosynthesis.</text>
</comment>
<comment type="induction">
    <text evidence="2">Expression is induced in loline alkaloid-producing cultures as well as in planta (PubMed:15654104).</text>
</comment>
<comment type="biotechnology">
    <text evidence="12">Loline alkaloids show broad-spectrum anti-insect activity, and different lolines may have different biological activities (PubMed:25531527). In vitro tests of NFL, NAL, NML, and semisynthetic loline derivatives with long carbon-chain acylations on the 1-amine have shown that many are effective against both fall armyworm larvae and European corn borer larvae, but the effects seem to differ depending on the modifications (PubMed:25531527). N-Formylloline reduces the weight gain of fall armyworms by deterring feeding, and does not significantly affect corn borers (PubMed:25531527). In contrast, NAL reduces the weight gain of corn borer larvae without changing larval feeding behavior, indicating that its effect is due to metabolic toxicity. N-formylloline, NAL, and NML are almost as potent as nicotine in insecticidal activity against green bugs (PubMed:25531527).</text>
</comment>
<comment type="similarity">
    <text evidence="10">Belongs to the class-V pyridoxal-phosphate-dependent aminotransferase family.</text>
</comment>
<name>LOLT2_EPIUN</name>
<protein>
    <recommendedName>
        <fullName evidence="9">L-cysteine desulfhydrase-like protein lolT2</fullName>
        <ecNumber evidence="11">4.4.1.-</ecNumber>
    </recommendedName>
    <alternativeName>
        <fullName evidence="9">Loline biosynthesis cluster 2 protein T</fullName>
    </alternativeName>
</protein>
<dbReference type="EC" id="4.4.1.-" evidence="11"/>
<dbReference type="EMBL" id="AY723750">
    <property type="protein sequence ID" value="AAV68700.1"/>
    <property type="molecule type" value="Genomic_DNA"/>
</dbReference>
<dbReference type="SMR" id="Q5MNH3"/>
<dbReference type="GO" id="GO:0016829">
    <property type="term" value="F:lyase activity"/>
    <property type="evidence" value="ECO:0007669"/>
    <property type="project" value="UniProtKB-KW"/>
</dbReference>
<dbReference type="GO" id="GO:0009820">
    <property type="term" value="P:alkaloid metabolic process"/>
    <property type="evidence" value="ECO:0007669"/>
    <property type="project" value="UniProtKB-KW"/>
</dbReference>
<dbReference type="Gene3D" id="3.40.640.10">
    <property type="entry name" value="Type I PLP-dependent aspartate aminotransferase-like (Major domain)"/>
    <property type="match status" value="1"/>
</dbReference>
<dbReference type="InterPro" id="IPR000192">
    <property type="entry name" value="Aminotrans_V_dom"/>
</dbReference>
<dbReference type="InterPro" id="IPR015424">
    <property type="entry name" value="PyrdxlP-dep_Trfase"/>
</dbReference>
<dbReference type="InterPro" id="IPR015421">
    <property type="entry name" value="PyrdxlP-dep_Trfase_major"/>
</dbReference>
<dbReference type="PANTHER" id="PTHR43092:SF2">
    <property type="entry name" value="HERCYNYLCYSTEINE SULFOXIDE LYASE"/>
    <property type="match status" value="1"/>
</dbReference>
<dbReference type="PANTHER" id="PTHR43092">
    <property type="entry name" value="L-CYSTEINE DESULFHYDRASE"/>
    <property type="match status" value="1"/>
</dbReference>
<dbReference type="Pfam" id="PF00266">
    <property type="entry name" value="Aminotran_5"/>
    <property type="match status" value="1"/>
</dbReference>
<dbReference type="SUPFAM" id="SSF53383">
    <property type="entry name" value="PLP-dependent transferases"/>
    <property type="match status" value="1"/>
</dbReference>
<accession>Q5MNH3</accession>
<evidence type="ECO:0000250" key="1"/>
<evidence type="ECO:0000269" key="2">
    <source>
    </source>
</evidence>
<evidence type="ECO:0000269" key="3">
    <source>
    </source>
</evidence>
<evidence type="ECO:0000269" key="4">
    <source>
    </source>
</evidence>
<evidence type="ECO:0000269" key="5">
    <source>
    </source>
</evidence>
<evidence type="ECO:0000269" key="6">
    <source>
    </source>
</evidence>
<evidence type="ECO:0000269" key="7">
    <source>
    </source>
</evidence>
<evidence type="ECO:0000269" key="8">
    <source>
    </source>
</evidence>
<evidence type="ECO:0000303" key="9">
    <source>
    </source>
</evidence>
<evidence type="ECO:0000305" key="10"/>
<evidence type="ECO:0000305" key="11">
    <source>
    </source>
</evidence>
<evidence type="ECO:0000305" key="12">
    <source>
    </source>
</evidence>
<gene>
    <name evidence="9" type="primary">lolT2</name>
    <name evidence="9" type="synonym">lolT</name>
</gene>
<sequence>MTVNSKRIPFGKPMLEAFCMDPEYTNLNSSSCGSWPKVVSKQIRDYWSLLEAQPDLFSEFYQGLVLQEARLGLARLVHAAVSECVLVSNVTTGIFTVLYNQEFEERDVVVTLSTTYGAIDHGITSLAETRSFKTRRVEFELPTTGEKIVSQFETTIAQIRAKGLRPRLAILETIVSIPAVRMPFEDLLRVCQKECIMTLVDGAHSVGQFEVNLQELHPDFFVSDCHKWLFVPRPCAFLYVAERNQHMMRSAIPTSFGFIPKNGNSQLPLWSQMVSANGTASSFETLFAYTATSDNMPHLCIPTALRFRRDVCGGEAAIYEYIKWLAKEGGDKVAEILQTEVLEEPGLGAGADGQMRDCGIVTVRLPLAIATGPSTAPAHVPGGALTEKEVGPAVRYLTKALADRYKTWIPIADCRGWIWARLCAQVYLEVSDFEMAGNALKVICEEILSREMGQEISDSYRWHD</sequence>
<organism>
    <name type="scientific">Epichloe uncinata</name>
    <name type="common">Endophyte fungus</name>
    <name type="synonym">Neotyphodium uncinatum</name>
    <dbReference type="NCBI Taxonomy" id="5050"/>
    <lineage>
        <taxon>Eukaryota</taxon>
        <taxon>Fungi</taxon>
        <taxon>Dikarya</taxon>
        <taxon>Ascomycota</taxon>
        <taxon>Pezizomycotina</taxon>
        <taxon>Sordariomycetes</taxon>
        <taxon>Hypocreomycetidae</taxon>
        <taxon>Hypocreales</taxon>
        <taxon>Clavicipitaceae</taxon>
        <taxon>Epichloe</taxon>
    </lineage>
</organism>
<keyword id="KW-0017">Alkaloid metabolism</keyword>
<keyword id="KW-0456">Lyase</keyword>
<keyword id="KW-0663">Pyridoxal phosphate</keyword>